<accession>C6A186</accession>
<name>RL34_THESM</name>
<evidence type="ECO:0000255" key="1">
    <source>
        <dbReference type="HAMAP-Rule" id="MF_00349"/>
    </source>
</evidence>
<evidence type="ECO:0000256" key="2">
    <source>
        <dbReference type="SAM" id="MobiDB-lite"/>
    </source>
</evidence>
<evidence type="ECO:0000305" key="3"/>
<feature type="chain" id="PRO_1000205338" description="Large ribosomal subunit protein eL34">
    <location>
        <begin position="1"/>
        <end position="88"/>
    </location>
</feature>
<feature type="region of interest" description="Disordered" evidence="2">
    <location>
        <begin position="41"/>
        <end position="72"/>
    </location>
</feature>
<gene>
    <name evidence="1" type="primary">rpl34e</name>
    <name type="ordered locus">TSIB_0315</name>
</gene>
<protein>
    <recommendedName>
        <fullName evidence="1">Large ribosomal subunit protein eL34</fullName>
    </recommendedName>
    <alternativeName>
        <fullName evidence="3">50S ribosomal protein L34e</fullName>
    </alternativeName>
</protein>
<organism>
    <name type="scientific">Thermococcus sibiricus (strain DSM 12597 / MM 739)</name>
    <dbReference type="NCBI Taxonomy" id="604354"/>
    <lineage>
        <taxon>Archaea</taxon>
        <taxon>Methanobacteriati</taxon>
        <taxon>Methanobacteriota</taxon>
        <taxon>Thermococci</taxon>
        <taxon>Thermococcales</taxon>
        <taxon>Thermococcaceae</taxon>
        <taxon>Thermococcus</taxon>
    </lineage>
</organism>
<sequence length="88" mass="10345">MKTMHRSRSWRRKYVRTPGGRTVIHFERKKPKVAHCAMCGRPLNGIPRGRPNELRKLPKTKKRPERPMPNLCPSCMRRIMKAQARATL</sequence>
<proteinExistence type="inferred from homology"/>
<reference key="1">
    <citation type="journal article" date="2009" name="Appl. Environ. Microbiol.">
        <title>Metabolic versatility and indigenous origin of the archaeon Thermococcus sibiricus, isolated from a siberian oil reservoir, as revealed by genome analysis.</title>
        <authorList>
            <person name="Mardanov A.V."/>
            <person name="Ravin N.V."/>
            <person name="Svetlitchnyi V.A."/>
            <person name="Beletsky A.V."/>
            <person name="Miroshnichenko M.L."/>
            <person name="Bonch-Osmolovskaya E.A."/>
            <person name="Skryabin K.G."/>
        </authorList>
    </citation>
    <scope>NUCLEOTIDE SEQUENCE [LARGE SCALE GENOMIC DNA]</scope>
    <source>
        <strain>DSM 12597 / MM 739</strain>
    </source>
</reference>
<dbReference type="EMBL" id="CP001463">
    <property type="protein sequence ID" value="ACS89381.1"/>
    <property type="molecule type" value="Genomic_DNA"/>
</dbReference>
<dbReference type="RefSeq" id="WP_015848601.1">
    <property type="nucleotide sequence ID" value="NC_012883.1"/>
</dbReference>
<dbReference type="SMR" id="C6A186"/>
<dbReference type="STRING" id="604354.TSIB_0315"/>
<dbReference type="GeneID" id="8095288"/>
<dbReference type="KEGG" id="tsi:TSIB_0315"/>
<dbReference type="eggNOG" id="arCOG04168">
    <property type="taxonomic scope" value="Archaea"/>
</dbReference>
<dbReference type="HOGENOM" id="CLU_118652_2_0_2"/>
<dbReference type="OrthoDB" id="43096at2157"/>
<dbReference type="Proteomes" id="UP000009079">
    <property type="component" value="Chromosome"/>
</dbReference>
<dbReference type="GO" id="GO:1990904">
    <property type="term" value="C:ribonucleoprotein complex"/>
    <property type="evidence" value="ECO:0007669"/>
    <property type="project" value="UniProtKB-KW"/>
</dbReference>
<dbReference type="GO" id="GO:0005840">
    <property type="term" value="C:ribosome"/>
    <property type="evidence" value="ECO:0007669"/>
    <property type="project" value="UniProtKB-KW"/>
</dbReference>
<dbReference type="GO" id="GO:0003735">
    <property type="term" value="F:structural constituent of ribosome"/>
    <property type="evidence" value="ECO:0007669"/>
    <property type="project" value="InterPro"/>
</dbReference>
<dbReference type="GO" id="GO:0006412">
    <property type="term" value="P:translation"/>
    <property type="evidence" value="ECO:0007669"/>
    <property type="project" value="UniProtKB-UniRule"/>
</dbReference>
<dbReference type="Gene3D" id="6.20.340.10">
    <property type="match status" value="1"/>
</dbReference>
<dbReference type="HAMAP" id="MF_00349">
    <property type="entry name" value="Ribosomal_eL34"/>
    <property type="match status" value="1"/>
</dbReference>
<dbReference type="InterPro" id="IPR008195">
    <property type="entry name" value="Ribosomal_eL34"/>
</dbReference>
<dbReference type="InterPro" id="IPR038562">
    <property type="entry name" value="Ribosomal_eL34_C_sf"/>
</dbReference>
<dbReference type="InterPro" id="IPR018065">
    <property type="entry name" value="Ribosomal_eL34_CS"/>
</dbReference>
<dbReference type="InterPro" id="IPR047868">
    <property type="entry name" value="Ribosomal_L34e_arc-type"/>
</dbReference>
<dbReference type="NCBIfam" id="NF003143">
    <property type="entry name" value="PRK04059.1"/>
    <property type="match status" value="1"/>
</dbReference>
<dbReference type="Pfam" id="PF01199">
    <property type="entry name" value="Ribosomal_L34e"/>
    <property type="match status" value="1"/>
</dbReference>
<dbReference type="PRINTS" id="PR01250">
    <property type="entry name" value="RIBOSOMALL34"/>
</dbReference>
<dbReference type="PROSITE" id="PS01145">
    <property type="entry name" value="RIBOSOMAL_L34E"/>
    <property type="match status" value="1"/>
</dbReference>
<keyword id="KW-1185">Reference proteome</keyword>
<keyword id="KW-0687">Ribonucleoprotein</keyword>
<keyword id="KW-0689">Ribosomal protein</keyword>
<comment type="similarity">
    <text evidence="1">Belongs to the eukaryotic ribosomal protein eL34 family.</text>
</comment>